<comment type="similarity">
    <text evidence="1">Belongs to the UPF0367 family.</text>
</comment>
<sequence>MYILEISLKFTPMPVSVQRKEAEAAQAAYQQVVEALRSGQPSVLELHCEFQAEKKLAVLTSGIASVQLYEKSGGSATVKRPGFAVIGE</sequence>
<reference key="1">
    <citation type="journal article" date="2007" name="Photosyn. Res.">
        <title>Complete nucleotide sequence of the freshwater unicellular cyanobacterium Synechococcus elongatus PCC 6301 chromosome: gene content and organization.</title>
        <authorList>
            <person name="Sugita C."/>
            <person name="Ogata K."/>
            <person name="Shikata M."/>
            <person name="Jikuya H."/>
            <person name="Takano J."/>
            <person name="Furumichi M."/>
            <person name="Kanehisa M."/>
            <person name="Omata T."/>
            <person name="Sugiura M."/>
            <person name="Sugita M."/>
        </authorList>
    </citation>
    <scope>NUCLEOTIDE SEQUENCE [LARGE SCALE GENOMIC DNA]</scope>
    <source>
        <strain>ATCC 27144 / PCC 6301 / SAUG 1402/1</strain>
    </source>
</reference>
<organism>
    <name type="scientific">Synechococcus sp. (strain ATCC 27144 / PCC 6301 / SAUG 1402/1)</name>
    <name type="common">Anacystis nidulans</name>
    <dbReference type="NCBI Taxonomy" id="269084"/>
    <lineage>
        <taxon>Bacteria</taxon>
        <taxon>Bacillati</taxon>
        <taxon>Cyanobacteriota</taxon>
        <taxon>Cyanophyceae</taxon>
        <taxon>Synechococcales</taxon>
        <taxon>Synechococcaceae</taxon>
        <taxon>Synechococcus</taxon>
    </lineage>
</organism>
<name>Y2447_SYNP6</name>
<evidence type="ECO:0000255" key="1">
    <source>
        <dbReference type="HAMAP-Rule" id="MF_01360"/>
    </source>
</evidence>
<protein>
    <recommendedName>
        <fullName evidence="1">UPF0367 protein syc2447_c</fullName>
    </recommendedName>
</protein>
<gene>
    <name type="ordered locus">syc2447_c</name>
</gene>
<dbReference type="EMBL" id="AP008231">
    <property type="protein sequence ID" value="BAD80637.1"/>
    <property type="molecule type" value="Genomic_DNA"/>
</dbReference>
<dbReference type="RefSeq" id="WP_011244757.1">
    <property type="nucleotide sequence ID" value="NC_006576.1"/>
</dbReference>
<dbReference type="KEGG" id="syc:syc2447_c"/>
<dbReference type="eggNOG" id="ENOG5032YB3">
    <property type="taxonomic scope" value="Bacteria"/>
</dbReference>
<dbReference type="Proteomes" id="UP000001175">
    <property type="component" value="Chromosome"/>
</dbReference>
<dbReference type="HAMAP" id="MF_01360">
    <property type="entry name" value="UPF0367"/>
    <property type="match status" value="1"/>
</dbReference>
<dbReference type="InterPro" id="IPR020885">
    <property type="entry name" value="UPF0367"/>
</dbReference>
<dbReference type="NCBIfam" id="NF010236">
    <property type="entry name" value="PRK13683.1"/>
    <property type="match status" value="1"/>
</dbReference>
<feature type="chain" id="PRO_0000240502" description="UPF0367 protein syc2447_c">
    <location>
        <begin position="1"/>
        <end position="88"/>
    </location>
</feature>
<proteinExistence type="inferred from homology"/>
<accession>Q5MZ83</accession>